<feature type="chain" id="PRO_0000288791" description="Poly(ADP-ribose) glycohydrolase 1">
    <location>
        <begin position="1"/>
        <end position="548"/>
    </location>
</feature>
<feature type="mutagenesis site" description="In tej; loss of function." evidence="3">
    <original>G</original>
    <variation>E</variation>
    <location>
        <position position="262"/>
    </location>
</feature>
<feature type="sequence conflict" description="In Ref. 4; BAD95273." evidence="4" ref="4">
    <original>V</original>
    <variation>I</variation>
    <location>
        <position position="170"/>
    </location>
</feature>
<feature type="sequence conflict" description="In Ref. 4; BAD95273." evidence="4" ref="4">
    <location>
        <position position="408"/>
    </location>
</feature>
<evidence type="ECO:0000250" key="1"/>
<evidence type="ECO:0000250" key="2">
    <source>
        <dbReference type="UniProtKB" id="Q867X0"/>
    </source>
</evidence>
<evidence type="ECO:0000269" key="3">
    <source>
    </source>
</evidence>
<evidence type="ECO:0000305" key="4"/>
<keyword id="KW-0025">Alternative splicing</keyword>
<keyword id="KW-0090">Biological rhythms</keyword>
<keyword id="KW-0378">Hydrolase</keyword>
<keyword id="KW-1185">Reference proteome</keyword>
<sequence length="548" mass="62170">MENREDLNSILPYLPLVIRSSSLYWPPRVVEALKAMSEGPSHSQVDSGEVLRQAIFDMRRSLSFSTLEPSASNGYAFLFDELIDEKESKRWFDEIIPALASLLLQFPSLLEVHFQNADNIVSGIKTGLRLLNSQQAGIVFLSQELIGALLACSFFCLFPDDNRGAKHLPVINFDHLFASLYISYSQSQESKIRCIMHYFERFCSCVPIGIVSFERKITAAPDADFWSKSDVSLCAFKVHSFGLIEDQPDNALEVDFANKYLGGGSLSRGCVQEEIRFMINPELIAGMLFLPRMDDNEAIEIVGAERFSCYTGYASSFRFAGEYIDKKAMDPFKRRRTRIVAIDALCTPKMRHFKDICLLREINKALCGFLNCSKAWEHQNIFMDEGDNEIQLVRNGRDSGLLRTETTASHRTPLNDVEMNREKPANNLIRDFYVEGVDNEDHEDDGVATGNWGCGVFGGDPELKATIQWLAASQTRRPFISYYTFGVEALRNLDQVTKWILSHKWTVGDLWNMMLEYSAQRLYKQTSVGFFSWLLPSLATTNKAIQPP</sequence>
<reference key="1">
    <citation type="journal article" date="2002" name="Dev. Cell">
        <title>tej defines a role for poly(ADP-ribosyl)ation in establishing period length of the arabidopsis circadian oscillator.</title>
        <authorList>
            <person name="Panda S."/>
            <person name="Poirier G.G."/>
            <person name="Kay S.A."/>
        </authorList>
    </citation>
    <scope>NUCLEOTIDE SEQUENCE [MRNA]</scope>
    <scope>MUTAGENESIS OF GLY-262</scope>
    <scope>FUNCTION</scope>
    <source>
        <strain>cv. C24</strain>
    </source>
</reference>
<reference key="2">
    <citation type="journal article" date="1999" name="Nature">
        <title>Sequence and analysis of chromosome 2 of the plant Arabidopsis thaliana.</title>
        <authorList>
            <person name="Lin X."/>
            <person name="Kaul S."/>
            <person name="Rounsley S.D."/>
            <person name="Shea T.P."/>
            <person name="Benito M.-I."/>
            <person name="Town C.D."/>
            <person name="Fujii C.Y."/>
            <person name="Mason T.M."/>
            <person name="Bowman C.L."/>
            <person name="Barnstead M.E."/>
            <person name="Feldblyum T.V."/>
            <person name="Buell C.R."/>
            <person name="Ketchum K.A."/>
            <person name="Lee J.J."/>
            <person name="Ronning C.M."/>
            <person name="Koo H.L."/>
            <person name="Moffat K.S."/>
            <person name="Cronin L.A."/>
            <person name="Shen M."/>
            <person name="Pai G."/>
            <person name="Van Aken S."/>
            <person name="Umayam L."/>
            <person name="Tallon L.J."/>
            <person name="Gill J.E."/>
            <person name="Adams M.D."/>
            <person name="Carrera A.J."/>
            <person name="Creasy T.H."/>
            <person name="Goodman H.M."/>
            <person name="Somerville C.R."/>
            <person name="Copenhaver G.P."/>
            <person name="Preuss D."/>
            <person name="Nierman W.C."/>
            <person name="White O."/>
            <person name="Eisen J.A."/>
            <person name="Salzberg S.L."/>
            <person name="Fraser C.M."/>
            <person name="Venter J.C."/>
        </authorList>
    </citation>
    <scope>NUCLEOTIDE SEQUENCE [LARGE SCALE GENOMIC DNA]</scope>
    <source>
        <strain>cv. Columbia</strain>
    </source>
</reference>
<reference key="3">
    <citation type="journal article" date="2017" name="Plant J.">
        <title>Araport11: a complete reannotation of the Arabidopsis thaliana reference genome.</title>
        <authorList>
            <person name="Cheng C.Y."/>
            <person name="Krishnakumar V."/>
            <person name="Chan A.P."/>
            <person name="Thibaud-Nissen F."/>
            <person name="Schobel S."/>
            <person name="Town C.D."/>
        </authorList>
    </citation>
    <scope>GENOME REANNOTATION</scope>
    <source>
        <strain>cv. Columbia</strain>
    </source>
</reference>
<reference key="4">
    <citation type="submission" date="2005-03" db="EMBL/GenBank/DDBJ databases">
        <title>Large-scale analysis of RIKEN Arabidopsis full-length (RAFL) cDNAs.</title>
        <authorList>
            <person name="Totoki Y."/>
            <person name="Seki M."/>
            <person name="Ishida J."/>
            <person name="Nakajima M."/>
            <person name="Enju A."/>
            <person name="Kamiya A."/>
            <person name="Narusaka M."/>
            <person name="Shin-i T."/>
            <person name="Nakagawa M."/>
            <person name="Sakamoto N."/>
            <person name="Oishi K."/>
            <person name="Kohara Y."/>
            <person name="Kobayashi M."/>
            <person name="Toyoda A."/>
            <person name="Sakaki Y."/>
            <person name="Sakurai T."/>
            <person name="Iida K."/>
            <person name="Akiyama K."/>
            <person name="Satou M."/>
            <person name="Toyoda T."/>
            <person name="Konagaya A."/>
            <person name="Carninci P."/>
            <person name="Kawai J."/>
            <person name="Hayashizaki Y."/>
            <person name="Shinozaki K."/>
        </authorList>
    </citation>
    <scope>NUCLEOTIDE SEQUENCE [LARGE SCALE MRNA]</scope>
    <source>
        <strain>cv. Columbia</strain>
    </source>
</reference>
<protein>
    <recommendedName>
        <fullName>Poly(ADP-ribose) glycohydrolase 1</fullName>
        <ecNumber evidence="2">3.2.1.143</ecNumber>
    </recommendedName>
</protein>
<name>PARG1_ARATH</name>
<accession>Q9SKB3</accession>
<accession>Q56W82</accession>
<accession>Q94ET7</accession>
<proteinExistence type="evidence at protein level"/>
<organism>
    <name type="scientific">Arabidopsis thaliana</name>
    <name type="common">Mouse-ear cress</name>
    <dbReference type="NCBI Taxonomy" id="3702"/>
    <lineage>
        <taxon>Eukaryota</taxon>
        <taxon>Viridiplantae</taxon>
        <taxon>Streptophyta</taxon>
        <taxon>Embryophyta</taxon>
        <taxon>Tracheophyta</taxon>
        <taxon>Spermatophyta</taxon>
        <taxon>Magnoliopsida</taxon>
        <taxon>eudicotyledons</taxon>
        <taxon>Gunneridae</taxon>
        <taxon>Pentapetalae</taxon>
        <taxon>rosids</taxon>
        <taxon>malvids</taxon>
        <taxon>Brassicales</taxon>
        <taxon>Brassicaceae</taxon>
        <taxon>Camelineae</taxon>
        <taxon>Arabidopsis</taxon>
    </lineage>
</organism>
<comment type="function">
    <text evidence="1 3">Poly(ADP-ribose) synthesized after DNA damage is only present transiently and is rapidly degraded by poly(ADP-ribose) glycohydrolase (By similarity). Involved in establishing period length of the circadian oscillator. May regulate post-translational poly(ADP-ribosyl)ation of an oscillator component.</text>
</comment>
<comment type="catalytic activity">
    <reaction evidence="2">
        <text>[(1''-&gt;2')-ADP-alpha-D-ribose](n) + H2O = [(1''-&gt;2')-ADP-alpha-D-ribose](n-1) + ADP-D-ribose</text>
        <dbReference type="Rhea" id="RHEA:52216"/>
        <dbReference type="Rhea" id="RHEA-COMP:16922"/>
        <dbReference type="Rhea" id="RHEA-COMP:16923"/>
        <dbReference type="ChEBI" id="CHEBI:15377"/>
        <dbReference type="ChEBI" id="CHEBI:57967"/>
        <dbReference type="ChEBI" id="CHEBI:142512"/>
        <dbReference type="EC" id="3.2.1.143"/>
    </reaction>
</comment>
<comment type="alternative products">
    <event type="alternative splicing"/>
    <isoform>
        <id>Q9SKB3-1</id>
        <name>1</name>
        <sequence type="displayed"/>
    </isoform>
    <text>A number of isoforms are produced. According to EST sequences.</text>
</comment>
<comment type="similarity">
    <text evidence="4">Belongs to the poly(ADP-ribose) glycohydrolase family.</text>
</comment>
<dbReference type="EC" id="3.2.1.143" evidence="2"/>
<dbReference type="EMBL" id="AF394690">
    <property type="protein sequence ID" value="AAK72256.1"/>
    <property type="molecule type" value="mRNA"/>
</dbReference>
<dbReference type="EMBL" id="AC006533">
    <property type="protein sequence ID" value="AAD32285.2"/>
    <property type="molecule type" value="Genomic_DNA"/>
</dbReference>
<dbReference type="EMBL" id="CP002685">
    <property type="protein sequence ID" value="AEC08597.1"/>
    <property type="molecule type" value="Genomic_DNA"/>
</dbReference>
<dbReference type="EMBL" id="AK222165">
    <property type="protein sequence ID" value="BAD95273.1"/>
    <property type="molecule type" value="mRNA"/>
</dbReference>
<dbReference type="PIR" id="B84726">
    <property type="entry name" value="B84726"/>
</dbReference>
<dbReference type="RefSeq" id="NP_565730.1">
    <molecule id="Q9SKB3-1"/>
    <property type="nucleotide sequence ID" value="NM_128745.3"/>
</dbReference>
<dbReference type="SMR" id="Q9SKB3"/>
<dbReference type="BioGRID" id="3092">
    <property type="interactions" value="4"/>
</dbReference>
<dbReference type="FunCoup" id="Q9SKB3">
    <property type="interactions" value="1227"/>
</dbReference>
<dbReference type="STRING" id="3702.Q9SKB3"/>
<dbReference type="PaxDb" id="3702-AT2G31870.1"/>
<dbReference type="EnsemblPlants" id="AT2G31870.1">
    <molecule id="Q9SKB3-1"/>
    <property type="protein sequence ID" value="AT2G31870.1"/>
    <property type="gene ID" value="AT2G31870"/>
</dbReference>
<dbReference type="GeneID" id="817745"/>
<dbReference type="Gramene" id="AT2G31870.1">
    <molecule id="Q9SKB3-1"/>
    <property type="protein sequence ID" value="AT2G31870.1"/>
    <property type="gene ID" value="AT2G31870"/>
</dbReference>
<dbReference type="KEGG" id="ath:AT2G31870"/>
<dbReference type="Araport" id="AT2G31870"/>
<dbReference type="TAIR" id="AT2G31870">
    <property type="gene designation" value="TEJ"/>
</dbReference>
<dbReference type="eggNOG" id="KOG2064">
    <property type="taxonomic scope" value="Eukaryota"/>
</dbReference>
<dbReference type="InParanoid" id="Q9SKB3"/>
<dbReference type="OMA" id="LHGWTVG"/>
<dbReference type="OrthoDB" id="1937899at2759"/>
<dbReference type="PhylomeDB" id="Q9SKB3"/>
<dbReference type="BRENDA" id="3.2.1.143">
    <property type="organism ID" value="399"/>
</dbReference>
<dbReference type="PRO" id="PR:Q9SKB3"/>
<dbReference type="Proteomes" id="UP000006548">
    <property type="component" value="Chromosome 2"/>
</dbReference>
<dbReference type="ExpressionAtlas" id="Q9SKB3">
    <property type="expression patterns" value="baseline and differential"/>
</dbReference>
<dbReference type="GO" id="GO:0004649">
    <property type="term" value="F:poly(ADP-ribose) glycohydrolase activity"/>
    <property type="evidence" value="ECO:0000314"/>
    <property type="project" value="TAIR"/>
</dbReference>
<dbReference type="GO" id="GO:0005975">
    <property type="term" value="P:carbohydrate metabolic process"/>
    <property type="evidence" value="ECO:0007669"/>
    <property type="project" value="InterPro"/>
</dbReference>
<dbReference type="GO" id="GO:0050832">
    <property type="term" value="P:defense response to fungus"/>
    <property type="evidence" value="ECO:0000315"/>
    <property type="project" value="TAIR"/>
</dbReference>
<dbReference type="GO" id="GO:0006974">
    <property type="term" value="P:DNA damage response"/>
    <property type="evidence" value="ECO:0000315"/>
    <property type="project" value="TAIR"/>
</dbReference>
<dbReference type="GO" id="GO:0006282">
    <property type="term" value="P:regulation of DNA repair"/>
    <property type="evidence" value="ECO:0000315"/>
    <property type="project" value="TAIR"/>
</dbReference>
<dbReference type="GO" id="GO:0006970">
    <property type="term" value="P:response to osmotic stress"/>
    <property type="evidence" value="ECO:0000315"/>
    <property type="project" value="TAIR"/>
</dbReference>
<dbReference type="GO" id="GO:0006979">
    <property type="term" value="P:response to oxidative stress"/>
    <property type="evidence" value="ECO:0000315"/>
    <property type="project" value="TAIR"/>
</dbReference>
<dbReference type="GO" id="GO:0009414">
    <property type="term" value="P:response to water deprivation"/>
    <property type="evidence" value="ECO:0000315"/>
    <property type="project" value="TAIR"/>
</dbReference>
<dbReference type="GO" id="GO:0048511">
    <property type="term" value="P:rhythmic process"/>
    <property type="evidence" value="ECO:0007669"/>
    <property type="project" value="UniProtKB-KW"/>
</dbReference>
<dbReference type="GO" id="GO:0090332">
    <property type="term" value="P:stomatal closure"/>
    <property type="evidence" value="ECO:0000315"/>
    <property type="project" value="TAIR"/>
</dbReference>
<dbReference type="InterPro" id="IPR046372">
    <property type="entry name" value="PARG_cat_C"/>
</dbReference>
<dbReference type="InterPro" id="IPR048362">
    <property type="entry name" value="PARG_helical"/>
</dbReference>
<dbReference type="InterPro" id="IPR007724">
    <property type="entry name" value="Poly_GlycHdrlase"/>
</dbReference>
<dbReference type="PANTHER" id="PTHR12837">
    <property type="entry name" value="POLY ADP-RIBOSE GLYCOHYDROLASE"/>
    <property type="match status" value="1"/>
</dbReference>
<dbReference type="PANTHER" id="PTHR12837:SF0">
    <property type="entry name" value="POLY(ADP-RIBOSE) GLYCOHYDROLASE"/>
    <property type="match status" value="1"/>
</dbReference>
<dbReference type="Pfam" id="PF05028">
    <property type="entry name" value="PARG_cat_C"/>
    <property type="match status" value="1"/>
</dbReference>
<dbReference type="Pfam" id="PF20811">
    <property type="entry name" value="PARG_cat_N"/>
    <property type="match status" value="1"/>
</dbReference>
<gene>
    <name type="primary">PARG1</name>
    <name type="synonym">TEJ</name>
    <name type="ordered locus">At2g31870</name>
    <name type="ORF">F20M17.9</name>
</gene>